<comment type="function">
    <text>General factor that plays a major role in the activation of eukaryotic genes transcribed by RNA polymerase II.</text>
</comment>
<comment type="subunit">
    <text>Associates with TFIID-IIA (DA complex) to form TFIID-IIA-IIB (DAB-complex) which is then recognized by polymerase II.</text>
</comment>
<comment type="interaction">
    <interactant intactId="EBI-19123">
        <id>P29055</id>
    </interactant>
    <interactant intactId="EBI-15781">
        <id>P20434</id>
        <label>RPB5</label>
    </interactant>
    <organismsDiffer>false</organismsDiffer>
    <experiments>4</experiments>
</comment>
<comment type="subcellular location">
    <subcellularLocation>
        <location>Nucleus</location>
    </subcellularLocation>
</comment>
<comment type="miscellaneous">
    <text evidence="3">Present with 6750 molecules/cell in log phase SD medium.</text>
</comment>
<comment type="similarity">
    <text evidence="4">Belongs to the TFIIB family.</text>
</comment>
<accession>P29055</accession>
<accession>D6W488</accession>
<accession>E9P939</accession>
<proteinExistence type="evidence at protein level"/>
<sequence>MMTRESIDKRAGRRGPNLNIVLTCPECKVYPPKIVERFSEGDVVCALCGLVLSDKLVDTRSEWRTFSNDDHNGDDPSRVGEASNPLLDGNNLSTRIGKGETTDMRFTKELNKAQGKNVMDKKDNEVQAAFAKITMLCDAAELPKIVKDCAKEAYKLCHDEKTLKGKSMESIMAASILIGCRRAEVARTFKEIQSLIHVKTKEFGKTLNIMKNILRGKSEDGFLKIDTDNMSGAQNLTYIPRFCSHLGLPMQVTTSAEYTAKKCKEIKEIAGKSPITIAVVSIYLNILLFQIPITAAKVGQTLQVTEGTIKSGYKILYEHRDKLVDPQLIANGVVSLDNLPGVEKK</sequence>
<feature type="chain" id="PRO_0000119308" description="Transcription initiation factor IIB">
    <location>
        <begin position="1"/>
        <end position="345"/>
    </location>
</feature>
<feature type="repeat" description="1">
    <location>
        <begin position="136"/>
        <end position="212"/>
    </location>
</feature>
<feature type="repeat" description="2">
    <location>
        <begin position="242"/>
        <end position="318"/>
    </location>
</feature>
<feature type="zinc finger region" description="TFIIB-type" evidence="1">
    <location>
        <begin position="20"/>
        <end position="53"/>
    </location>
</feature>
<feature type="region of interest" description="Disordered" evidence="2">
    <location>
        <begin position="65"/>
        <end position="93"/>
    </location>
</feature>
<feature type="compositionally biased region" description="Basic and acidic residues" evidence="2">
    <location>
        <begin position="65"/>
        <end position="78"/>
    </location>
</feature>
<feature type="binding site" evidence="1">
    <location>
        <position position="24"/>
    </location>
    <ligand>
        <name>Zn(2+)</name>
        <dbReference type="ChEBI" id="CHEBI:29105"/>
    </ligand>
</feature>
<feature type="binding site" evidence="1">
    <location>
        <position position="27"/>
    </location>
    <ligand>
        <name>Zn(2+)</name>
        <dbReference type="ChEBI" id="CHEBI:29105"/>
    </ligand>
</feature>
<feature type="binding site" evidence="1">
    <location>
        <position position="45"/>
    </location>
    <ligand>
        <name>Zn(2+)</name>
        <dbReference type="ChEBI" id="CHEBI:29105"/>
    </ligand>
</feature>
<feature type="binding site" evidence="1">
    <location>
        <position position="48"/>
    </location>
    <ligand>
        <name>Zn(2+)</name>
        <dbReference type="ChEBI" id="CHEBI:29105"/>
    </ligand>
</feature>
<feature type="sequence conflict" description="In Ref. 4; AAT93251." evidence="4" ref="4">
    <original>R</original>
    <variation>L</variation>
    <location>
        <position position="10"/>
    </location>
</feature>
<feature type="turn" evidence="7">
    <location>
        <begin position="25"/>
        <end position="27"/>
    </location>
</feature>
<feature type="strand" evidence="7">
    <location>
        <begin position="34"/>
        <end position="37"/>
    </location>
</feature>
<feature type="turn" evidence="7">
    <location>
        <begin position="38"/>
        <end position="41"/>
    </location>
</feature>
<feature type="strand" evidence="7">
    <location>
        <begin position="42"/>
        <end position="45"/>
    </location>
</feature>
<feature type="turn" evidence="7">
    <location>
        <begin position="46"/>
        <end position="48"/>
    </location>
</feature>
<feature type="strand" evidence="7">
    <location>
        <begin position="50"/>
        <end position="55"/>
    </location>
</feature>
<feature type="helix" evidence="6">
    <location>
        <begin position="61"/>
        <end position="64"/>
    </location>
</feature>
<feature type="strand" evidence="5">
    <location>
        <begin position="71"/>
        <end position="73"/>
    </location>
</feature>
<feature type="strand" evidence="7">
    <location>
        <begin position="80"/>
        <end position="83"/>
    </location>
</feature>
<feature type="turn" evidence="7">
    <location>
        <begin position="85"/>
        <end position="87"/>
    </location>
</feature>
<feature type="strand" evidence="7">
    <location>
        <begin position="95"/>
        <end position="97"/>
    </location>
</feature>
<feature type="strand" evidence="8">
    <location>
        <begin position="100"/>
        <end position="102"/>
    </location>
</feature>
<feature type="helix" evidence="7">
    <location>
        <begin position="104"/>
        <end position="115"/>
    </location>
</feature>
<feature type="strand" evidence="6">
    <location>
        <begin position="117"/>
        <end position="120"/>
    </location>
</feature>
<feature type="helix" evidence="7">
    <location>
        <begin position="121"/>
        <end position="139"/>
    </location>
</feature>
<feature type="helix" evidence="7">
    <location>
        <begin position="144"/>
        <end position="157"/>
    </location>
</feature>
<feature type="strand" evidence="8">
    <location>
        <begin position="158"/>
        <end position="160"/>
    </location>
</feature>
<feature type="turn" evidence="6">
    <location>
        <begin position="161"/>
        <end position="163"/>
    </location>
</feature>
<feature type="helix" evidence="7">
    <location>
        <begin position="168"/>
        <end position="182"/>
    </location>
</feature>
<feature type="helix" evidence="7">
    <location>
        <begin position="189"/>
        <end position="193"/>
    </location>
</feature>
<feature type="helix" evidence="7">
    <location>
        <begin position="200"/>
        <end position="219"/>
    </location>
</feature>
<feature type="helix" evidence="7">
    <location>
        <begin position="228"/>
        <end position="230"/>
    </location>
</feature>
<feature type="helix" evidence="7">
    <location>
        <begin position="235"/>
        <end position="237"/>
    </location>
</feature>
<feature type="helix" evidence="7">
    <location>
        <begin position="239"/>
        <end position="246"/>
    </location>
</feature>
<feature type="helix" evidence="7">
    <location>
        <begin position="250"/>
        <end position="262"/>
    </location>
</feature>
<feature type="helix" evidence="7">
    <location>
        <begin position="263"/>
        <end position="265"/>
    </location>
</feature>
<feature type="helix" evidence="7">
    <location>
        <begin position="267"/>
        <end position="270"/>
    </location>
</feature>
<feature type="helix" evidence="7">
    <location>
        <begin position="274"/>
        <end position="288"/>
    </location>
</feature>
<feature type="helix" evidence="7">
    <location>
        <begin position="295"/>
        <end position="301"/>
    </location>
</feature>
<feature type="helix" evidence="7">
    <location>
        <begin position="306"/>
        <end position="315"/>
    </location>
</feature>
<feature type="turn" evidence="7">
    <location>
        <begin position="316"/>
        <end position="319"/>
    </location>
</feature>
<feature type="helix" evidence="7">
    <location>
        <begin position="320"/>
        <end position="323"/>
    </location>
</feature>
<feature type="helix" evidence="7">
    <location>
        <begin position="326"/>
        <end position="331"/>
    </location>
</feature>
<feature type="helix" evidence="7">
    <location>
        <begin position="336"/>
        <end position="338"/>
    </location>
</feature>
<gene>
    <name type="primary">SUA7</name>
    <name type="ordered locus">YPR086W</name>
    <name type="ORF">P9513.4</name>
</gene>
<reference key="1">
    <citation type="journal article" date="1992" name="Cell">
        <title>The yeast SUA7 gene encodes a homolog of human transcription factor TFIIB and is required for normal start site selection in vivo.</title>
        <authorList>
            <person name="Pinto I."/>
            <person name="Ware D.E."/>
            <person name="Hampsey M."/>
        </authorList>
    </citation>
    <scope>NUCLEOTIDE SEQUENCE [GENOMIC DNA]</scope>
</reference>
<reference key="2">
    <citation type="journal article" date="1997" name="Nature">
        <title>The nucleotide sequence of Saccharomyces cerevisiae chromosome XVI.</title>
        <authorList>
            <person name="Bussey H."/>
            <person name="Storms R.K."/>
            <person name="Ahmed A."/>
            <person name="Albermann K."/>
            <person name="Allen E."/>
            <person name="Ansorge W."/>
            <person name="Araujo R."/>
            <person name="Aparicio A."/>
            <person name="Barrell B.G."/>
            <person name="Badcock K."/>
            <person name="Benes V."/>
            <person name="Botstein D."/>
            <person name="Bowman S."/>
            <person name="Brueckner M."/>
            <person name="Carpenter J."/>
            <person name="Cherry J.M."/>
            <person name="Chung E."/>
            <person name="Churcher C.M."/>
            <person name="Coster F."/>
            <person name="Davis K."/>
            <person name="Davis R.W."/>
            <person name="Dietrich F.S."/>
            <person name="Delius H."/>
            <person name="DiPaolo T."/>
            <person name="Dubois E."/>
            <person name="Duesterhoeft A."/>
            <person name="Duncan M."/>
            <person name="Floeth M."/>
            <person name="Fortin N."/>
            <person name="Friesen J.D."/>
            <person name="Fritz C."/>
            <person name="Goffeau A."/>
            <person name="Hall J."/>
            <person name="Hebling U."/>
            <person name="Heumann K."/>
            <person name="Hilbert H."/>
            <person name="Hillier L.W."/>
            <person name="Hunicke-Smith S."/>
            <person name="Hyman R.W."/>
            <person name="Johnston M."/>
            <person name="Kalman S."/>
            <person name="Kleine K."/>
            <person name="Komp C."/>
            <person name="Kurdi O."/>
            <person name="Lashkari D."/>
            <person name="Lew H."/>
            <person name="Lin A."/>
            <person name="Lin D."/>
            <person name="Louis E.J."/>
            <person name="Marathe R."/>
            <person name="Messenguy F."/>
            <person name="Mewes H.-W."/>
            <person name="Mirtipati S."/>
            <person name="Moestl D."/>
            <person name="Mueller-Auer S."/>
            <person name="Namath A."/>
            <person name="Nentwich U."/>
            <person name="Oefner P."/>
            <person name="Pearson D."/>
            <person name="Petel F.X."/>
            <person name="Pohl T.M."/>
            <person name="Purnelle B."/>
            <person name="Rajandream M.A."/>
            <person name="Rechmann S."/>
            <person name="Rieger M."/>
            <person name="Riles L."/>
            <person name="Roberts D."/>
            <person name="Schaefer M."/>
            <person name="Scharfe M."/>
            <person name="Scherens B."/>
            <person name="Schramm S."/>
            <person name="Schroeder M."/>
            <person name="Sdicu A.-M."/>
            <person name="Tettelin H."/>
            <person name="Urrestarazu L.A."/>
            <person name="Ushinsky S."/>
            <person name="Vierendeels F."/>
            <person name="Vissers S."/>
            <person name="Voss H."/>
            <person name="Walsh S.V."/>
            <person name="Wambutt R."/>
            <person name="Wang Y."/>
            <person name="Wedler E."/>
            <person name="Wedler H."/>
            <person name="Winnett E."/>
            <person name="Zhong W.-W."/>
            <person name="Zollner A."/>
            <person name="Vo D.H."/>
            <person name="Hani J."/>
        </authorList>
    </citation>
    <scope>NUCLEOTIDE SEQUENCE [LARGE SCALE GENOMIC DNA]</scope>
    <source>
        <strain>ATCC 204508 / S288c</strain>
    </source>
</reference>
<reference key="3">
    <citation type="journal article" date="2014" name="G3 (Bethesda)">
        <title>The reference genome sequence of Saccharomyces cerevisiae: Then and now.</title>
        <authorList>
            <person name="Engel S.R."/>
            <person name="Dietrich F.S."/>
            <person name="Fisk D.G."/>
            <person name="Binkley G."/>
            <person name="Balakrishnan R."/>
            <person name="Costanzo M.C."/>
            <person name="Dwight S.S."/>
            <person name="Hitz B.C."/>
            <person name="Karra K."/>
            <person name="Nash R.S."/>
            <person name="Weng S."/>
            <person name="Wong E.D."/>
            <person name="Lloyd P."/>
            <person name="Skrzypek M.S."/>
            <person name="Miyasato S.R."/>
            <person name="Simison M."/>
            <person name="Cherry J.M."/>
        </authorList>
    </citation>
    <scope>GENOME REANNOTATION</scope>
    <source>
        <strain>ATCC 204508 / S288c</strain>
    </source>
</reference>
<reference key="4">
    <citation type="journal article" date="2007" name="Genome Res.">
        <title>Approaching a complete repository of sequence-verified protein-encoding clones for Saccharomyces cerevisiae.</title>
        <authorList>
            <person name="Hu Y."/>
            <person name="Rolfs A."/>
            <person name="Bhullar B."/>
            <person name="Murthy T.V.S."/>
            <person name="Zhu C."/>
            <person name="Berger M.F."/>
            <person name="Camargo A.A."/>
            <person name="Kelley F."/>
            <person name="McCarron S."/>
            <person name="Jepson D."/>
            <person name="Richardson A."/>
            <person name="Raphael J."/>
            <person name="Moreira D."/>
            <person name="Taycher E."/>
            <person name="Zuo D."/>
            <person name="Mohr S."/>
            <person name="Kane M.F."/>
            <person name="Williamson J."/>
            <person name="Simpson A.J.G."/>
            <person name="Bulyk M.L."/>
            <person name="Harlow E."/>
            <person name="Marsischky G."/>
            <person name="Kolodner R.D."/>
            <person name="LaBaer J."/>
        </authorList>
    </citation>
    <scope>NUCLEOTIDE SEQUENCE [GENOMIC DNA]</scope>
    <source>
        <strain>ATCC 204508 / S288c</strain>
    </source>
</reference>
<reference key="5">
    <citation type="journal article" date="2003" name="Nature">
        <title>Global analysis of protein expression in yeast.</title>
        <authorList>
            <person name="Ghaemmaghami S."/>
            <person name="Huh W.-K."/>
            <person name="Bower K."/>
            <person name="Howson R.W."/>
            <person name="Belle A."/>
            <person name="Dephoure N."/>
            <person name="O'Shea E.K."/>
            <person name="Weissman J.S."/>
        </authorList>
    </citation>
    <scope>LEVEL OF PROTEIN EXPRESSION [LARGE SCALE ANALYSIS]</scope>
</reference>
<name>TF2B_YEAST</name>
<keyword id="KW-0002">3D-structure</keyword>
<keyword id="KW-0479">Metal-binding</keyword>
<keyword id="KW-0539">Nucleus</keyword>
<keyword id="KW-1185">Reference proteome</keyword>
<keyword id="KW-0677">Repeat</keyword>
<keyword id="KW-0804">Transcription</keyword>
<keyword id="KW-0805">Transcription regulation</keyword>
<keyword id="KW-0862">Zinc</keyword>
<keyword id="KW-0863">Zinc-finger</keyword>
<organism>
    <name type="scientific">Saccharomyces cerevisiae (strain ATCC 204508 / S288c)</name>
    <name type="common">Baker's yeast</name>
    <dbReference type="NCBI Taxonomy" id="559292"/>
    <lineage>
        <taxon>Eukaryota</taxon>
        <taxon>Fungi</taxon>
        <taxon>Dikarya</taxon>
        <taxon>Ascomycota</taxon>
        <taxon>Saccharomycotina</taxon>
        <taxon>Saccharomycetes</taxon>
        <taxon>Saccharomycetales</taxon>
        <taxon>Saccharomycetaceae</taxon>
        <taxon>Saccharomyces</taxon>
    </lineage>
</organism>
<protein>
    <recommendedName>
        <fullName>Transcription initiation factor IIB</fullName>
    </recommendedName>
    <alternativeName>
        <fullName>General transcription factor TFIIB</fullName>
    </alternativeName>
    <alternativeName>
        <fullName>Transcription factor E</fullName>
    </alternativeName>
</protein>
<evidence type="ECO:0000255" key="1">
    <source>
        <dbReference type="PROSITE-ProRule" id="PRU00469"/>
    </source>
</evidence>
<evidence type="ECO:0000256" key="2">
    <source>
        <dbReference type="SAM" id="MobiDB-lite"/>
    </source>
</evidence>
<evidence type="ECO:0000269" key="3">
    <source>
    </source>
</evidence>
<evidence type="ECO:0000305" key="4"/>
<evidence type="ECO:0007829" key="5">
    <source>
        <dbReference type="PDB" id="4BBR"/>
    </source>
</evidence>
<evidence type="ECO:0007829" key="6">
    <source>
        <dbReference type="PDB" id="7ML0"/>
    </source>
</evidence>
<evidence type="ECO:0007829" key="7">
    <source>
        <dbReference type="PDB" id="7O4J"/>
    </source>
</evidence>
<evidence type="ECO:0007829" key="8">
    <source>
        <dbReference type="PDB" id="7ZS9"/>
    </source>
</evidence>
<dbReference type="EMBL" id="M81380">
    <property type="protein sequence ID" value="AAA35126.1"/>
    <property type="molecule type" value="Genomic_DNA"/>
</dbReference>
<dbReference type="EMBL" id="U51033">
    <property type="protein sequence ID" value="AAB68135.1"/>
    <property type="molecule type" value="Genomic_DNA"/>
</dbReference>
<dbReference type="EMBL" id="AY693232">
    <property type="protein sequence ID" value="AAT93251.1"/>
    <property type="molecule type" value="Genomic_DNA"/>
</dbReference>
<dbReference type="EMBL" id="BK006949">
    <property type="protein sequence ID" value="DAA11504.1"/>
    <property type="molecule type" value="Genomic_DNA"/>
</dbReference>
<dbReference type="PIR" id="S26707">
    <property type="entry name" value="S26707"/>
</dbReference>
<dbReference type="RefSeq" id="NP_015411.1">
    <property type="nucleotide sequence ID" value="NM_001184183.1"/>
</dbReference>
<dbReference type="PDB" id="3K1F">
    <property type="method" value="X-ray"/>
    <property type="resolution" value="4.30 A"/>
    <property type="chains" value="M=1-68"/>
</dbReference>
<dbReference type="PDB" id="3K7A">
    <property type="method" value="X-ray"/>
    <property type="resolution" value="3.80 A"/>
    <property type="chains" value="M=1-345"/>
</dbReference>
<dbReference type="PDB" id="4BBR">
    <property type="method" value="X-ray"/>
    <property type="resolution" value="3.40 A"/>
    <property type="chains" value="M=1-345"/>
</dbReference>
<dbReference type="PDB" id="4BBS">
    <property type="method" value="X-ray"/>
    <property type="resolution" value="3.60 A"/>
    <property type="chains" value="M=1-345"/>
</dbReference>
<dbReference type="PDB" id="4V1N">
    <property type="method" value="EM"/>
    <property type="resolution" value="7.80 A"/>
    <property type="chains" value="M=1-345"/>
</dbReference>
<dbReference type="PDB" id="4V1O">
    <property type="method" value="EM"/>
    <property type="resolution" value="9.70 A"/>
    <property type="chains" value="M=1-345"/>
</dbReference>
<dbReference type="PDB" id="5FMF">
    <property type="method" value="EM"/>
    <property type="resolution" value="6.00 A"/>
    <property type="chains" value="P=1-345"/>
</dbReference>
<dbReference type="PDB" id="5FYW">
    <property type="method" value="EM"/>
    <property type="resolution" value="4.35 A"/>
    <property type="chains" value="M=1-345"/>
</dbReference>
<dbReference type="PDB" id="5FZ5">
    <property type="method" value="EM"/>
    <property type="resolution" value="8.80 A"/>
    <property type="chains" value="M=1-345"/>
</dbReference>
<dbReference type="PDB" id="5OQJ">
    <property type="method" value="EM"/>
    <property type="resolution" value="4.70 A"/>
    <property type="chains" value="M=1-345"/>
</dbReference>
<dbReference type="PDB" id="5OQM">
    <property type="method" value="EM"/>
    <property type="resolution" value="5.80 A"/>
    <property type="chains" value="M=1-345"/>
</dbReference>
<dbReference type="PDB" id="5SVA">
    <property type="method" value="EM"/>
    <property type="resolution" value="15.30 A"/>
    <property type="chains" value="c=1-345"/>
</dbReference>
<dbReference type="PDB" id="6GYK">
    <property type="method" value="EM"/>
    <property type="resolution" value="5.10 A"/>
    <property type="chains" value="M=1-345"/>
</dbReference>
<dbReference type="PDB" id="6GYL">
    <property type="method" value="EM"/>
    <property type="resolution" value="4.80 A"/>
    <property type="chains" value="M=1-345"/>
</dbReference>
<dbReference type="PDB" id="6GYM">
    <property type="method" value="EM"/>
    <property type="resolution" value="6.70 A"/>
    <property type="chains" value="M=1-345"/>
</dbReference>
<dbReference type="PDB" id="7ML0">
    <property type="method" value="EM"/>
    <property type="resolution" value="3.00 A"/>
    <property type="chains" value="M=1-345"/>
</dbReference>
<dbReference type="PDB" id="7ML1">
    <property type="method" value="EM"/>
    <property type="resolution" value="4.00 A"/>
    <property type="chains" value="M=1-345"/>
</dbReference>
<dbReference type="PDB" id="7ML2">
    <property type="method" value="EM"/>
    <property type="resolution" value="3.40 A"/>
    <property type="chains" value="M=1-345"/>
</dbReference>
<dbReference type="PDB" id="7ML4">
    <property type="method" value="EM"/>
    <property type="resolution" value="3.10 A"/>
    <property type="chains" value="M=1-345"/>
</dbReference>
<dbReference type="PDB" id="7O4I">
    <property type="method" value="EM"/>
    <property type="resolution" value="3.20 A"/>
    <property type="chains" value="M=1-345"/>
</dbReference>
<dbReference type="PDB" id="7O4J">
    <property type="method" value="EM"/>
    <property type="resolution" value="2.90 A"/>
    <property type="chains" value="M=1-345"/>
</dbReference>
<dbReference type="PDB" id="7O72">
    <property type="method" value="EM"/>
    <property type="resolution" value="3.40 A"/>
    <property type="chains" value="M=1-345"/>
</dbReference>
<dbReference type="PDB" id="7O73">
    <property type="method" value="EM"/>
    <property type="resolution" value="3.40 A"/>
    <property type="chains" value="M=1-345"/>
</dbReference>
<dbReference type="PDB" id="7O75">
    <property type="method" value="EM"/>
    <property type="resolution" value="3.20 A"/>
    <property type="chains" value="M=1-345"/>
</dbReference>
<dbReference type="PDB" id="7UI9">
    <property type="method" value="EM"/>
    <property type="resolution" value="3.30 A"/>
    <property type="chains" value="M=1-345"/>
</dbReference>
<dbReference type="PDB" id="7UIF">
    <property type="method" value="EM"/>
    <property type="resolution" value="4.60 A"/>
    <property type="chains" value="M=1-345"/>
</dbReference>
<dbReference type="PDB" id="7UIO">
    <property type="method" value="EM"/>
    <property type="resolution" value="3.30 A"/>
    <property type="chains" value="AM/BM=1-345"/>
</dbReference>
<dbReference type="PDB" id="7ZS9">
    <property type="method" value="EM"/>
    <property type="resolution" value="3.10 A"/>
    <property type="chains" value="M=1-345"/>
</dbReference>
<dbReference type="PDB" id="7ZSA">
    <property type="method" value="EM"/>
    <property type="resolution" value="4.00 A"/>
    <property type="chains" value="M=1-345"/>
</dbReference>
<dbReference type="PDB" id="7ZSB">
    <property type="method" value="EM"/>
    <property type="resolution" value="6.60 A"/>
    <property type="chains" value="M=1-345"/>
</dbReference>
<dbReference type="PDB" id="8CEN">
    <property type="method" value="EM"/>
    <property type="resolution" value="3.00 A"/>
    <property type="chains" value="M=1-345"/>
</dbReference>
<dbReference type="PDB" id="8CEO">
    <property type="method" value="EM"/>
    <property type="resolution" value="3.60 A"/>
    <property type="chains" value="M=1-345"/>
</dbReference>
<dbReference type="PDB" id="8UMH">
    <property type="method" value="EM"/>
    <property type="resolution" value="4.10 A"/>
    <property type="chains" value="M=1-345"/>
</dbReference>
<dbReference type="PDB" id="8UMI">
    <property type="method" value="EM"/>
    <property type="resolution" value="3.70 A"/>
    <property type="chains" value="M=1-345"/>
</dbReference>
<dbReference type="PDB" id="8UOQ">
    <property type="method" value="EM"/>
    <property type="resolution" value="3.80 A"/>
    <property type="chains" value="M=1-345"/>
</dbReference>
<dbReference type="PDB" id="8UOT">
    <property type="method" value="EM"/>
    <property type="resolution" value="3.70 A"/>
    <property type="chains" value="M=1-345"/>
</dbReference>
<dbReference type="PDBsum" id="3K1F"/>
<dbReference type="PDBsum" id="3K7A"/>
<dbReference type="PDBsum" id="4BBR"/>
<dbReference type="PDBsum" id="4BBS"/>
<dbReference type="PDBsum" id="4V1N"/>
<dbReference type="PDBsum" id="4V1O"/>
<dbReference type="PDBsum" id="5FMF"/>
<dbReference type="PDBsum" id="5FYW"/>
<dbReference type="PDBsum" id="5FZ5"/>
<dbReference type="PDBsum" id="5OQJ"/>
<dbReference type="PDBsum" id="5OQM"/>
<dbReference type="PDBsum" id="5SVA"/>
<dbReference type="PDBsum" id="6GYK"/>
<dbReference type="PDBsum" id="6GYL"/>
<dbReference type="PDBsum" id="6GYM"/>
<dbReference type="PDBsum" id="7ML0"/>
<dbReference type="PDBsum" id="7ML1"/>
<dbReference type="PDBsum" id="7ML2"/>
<dbReference type="PDBsum" id="7ML4"/>
<dbReference type="PDBsum" id="7O4I"/>
<dbReference type="PDBsum" id="7O4J"/>
<dbReference type="PDBsum" id="7O72"/>
<dbReference type="PDBsum" id="7O73"/>
<dbReference type="PDBsum" id="7O75"/>
<dbReference type="PDBsum" id="7UI9"/>
<dbReference type="PDBsum" id="7UIF"/>
<dbReference type="PDBsum" id="7UIO"/>
<dbReference type="PDBsum" id="7ZS9"/>
<dbReference type="PDBsum" id="7ZSA"/>
<dbReference type="PDBsum" id="7ZSB"/>
<dbReference type="PDBsum" id="8CEN"/>
<dbReference type="PDBsum" id="8CEO"/>
<dbReference type="PDBsum" id="8UMH"/>
<dbReference type="PDBsum" id="8UMI"/>
<dbReference type="PDBsum" id="8UOQ"/>
<dbReference type="PDBsum" id="8UOT"/>
<dbReference type="EMDB" id="EMD-0090"/>
<dbReference type="EMDB" id="EMD-0091"/>
<dbReference type="EMDB" id="EMD-0092"/>
<dbReference type="EMDB" id="EMD-12719"/>
<dbReference type="EMDB" id="EMD-12720"/>
<dbReference type="EMDB" id="EMD-12743"/>
<dbReference type="EMDB" id="EMD-12744"/>
<dbReference type="EMDB" id="EMD-12745"/>
<dbReference type="EMDB" id="EMD-14927"/>
<dbReference type="EMDB" id="EMD-14928"/>
<dbReference type="EMDB" id="EMD-14929"/>
<dbReference type="EMDB" id="EMD-16610"/>
<dbReference type="EMDB" id="EMD-16611"/>
<dbReference type="EMDB" id="EMD-23904"/>
<dbReference type="EMDB" id="EMD-23905"/>
<dbReference type="EMDB" id="EMD-23906"/>
<dbReference type="EMDB" id="EMD-23908"/>
<dbReference type="EMDB" id="EMD-26542"/>
<dbReference type="EMDB" id="EMD-26544"/>
<dbReference type="EMDB" id="EMD-26551"/>
<dbReference type="EMDB" id="EMD-2785"/>
<dbReference type="EMDB" id="EMD-2786"/>
<dbReference type="EMDB" id="EMD-3378"/>
<dbReference type="EMDB" id="EMD-3383"/>
<dbReference type="EMDB" id="EMD-3846"/>
<dbReference type="EMDB" id="EMD-3850"/>
<dbReference type="EMDB" id="EMD-42379"/>
<dbReference type="EMDB" id="EMD-42380"/>
<dbReference type="EMDB" id="EMD-42437"/>
<dbReference type="EMDB" id="EMD-42438"/>
<dbReference type="EMDB" id="EMD-8305"/>
<dbReference type="SMR" id="P29055"/>
<dbReference type="BioGRID" id="36257">
    <property type="interactions" value="3097"/>
</dbReference>
<dbReference type="DIP" id="DIP-701N"/>
<dbReference type="FunCoup" id="P29055">
    <property type="interactions" value="933"/>
</dbReference>
<dbReference type="IntAct" id="P29055">
    <property type="interactions" value="67"/>
</dbReference>
<dbReference type="MINT" id="P29055"/>
<dbReference type="STRING" id="4932.YPR086W"/>
<dbReference type="MoonDB" id="P29055">
    <property type="type" value="Predicted"/>
</dbReference>
<dbReference type="iPTMnet" id="P29055"/>
<dbReference type="PaxDb" id="4932-YPR086W"/>
<dbReference type="PeptideAtlas" id="P29055"/>
<dbReference type="EnsemblFungi" id="YPR086W_mRNA">
    <property type="protein sequence ID" value="YPR086W"/>
    <property type="gene ID" value="YPR086W"/>
</dbReference>
<dbReference type="GeneID" id="856201"/>
<dbReference type="KEGG" id="sce:YPR086W"/>
<dbReference type="AGR" id="SGD:S000006290"/>
<dbReference type="SGD" id="S000006290">
    <property type="gene designation" value="SUA7"/>
</dbReference>
<dbReference type="VEuPathDB" id="FungiDB:YPR086W"/>
<dbReference type="eggNOG" id="KOG1597">
    <property type="taxonomic scope" value="Eukaryota"/>
</dbReference>
<dbReference type="GeneTree" id="ENSGT00390000006671"/>
<dbReference type="HOGENOM" id="CLU_043736_1_0_1"/>
<dbReference type="InParanoid" id="P29055"/>
<dbReference type="OMA" id="DHDQRMK"/>
<dbReference type="OrthoDB" id="25790at2759"/>
<dbReference type="BioCyc" id="YEAST:G3O-34230-MONOMER"/>
<dbReference type="Reactome" id="R-SCE-674695">
    <property type="pathway name" value="RNA Polymerase II Pre-transcription Events"/>
</dbReference>
<dbReference type="Reactome" id="R-SCE-6807505">
    <property type="pathway name" value="RNA polymerase II transcribes snRNA genes"/>
</dbReference>
<dbReference type="Reactome" id="R-SCE-73776">
    <property type="pathway name" value="RNA Polymerase II Promoter Escape"/>
</dbReference>
<dbReference type="Reactome" id="R-SCE-73779">
    <property type="pathway name" value="RNA Polymerase II Transcription Pre-Initiation And Promoter Opening"/>
</dbReference>
<dbReference type="Reactome" id="R-SCE-75953">
    <property type="pathway name" value="RNA Polymerase II Transcription Initiation"/>
</dbReference>
<dbReference type="Reactome" id="R-SCE-76042">
    <property type="pathway name" value="RNA Polymerase II Transcription Initiation And Promoter Clearance"/>
</dbReference>
<dbReference type="BioGRID-ORCS" id="856201">
    <property type="hits" value="3 hits in 10 CRISPR screens"/>
</dbReference>
<dbReference type="EvolutionaryTrace" id="P29055"/>
<dbReference type="PRO" id="PR:P29055"/>
<dbReference type="Proteomes" id="UP000002311">
    <property type="component" value="Chromosome XVI"/>
</dbReference>
<dbReference type="RNAct" id="P29055">
    <property type="molecule type" value="protein"/>
</dbReference>
<dbReference type="GO" id="GO:0005634">
    <property type="term" value="C:nucleus"/>
    <property type="evidence" value="ECO:0000314"/>
    <property type="project" value="SGD"/>
</dbReference>
<dbReference type="GO" id="GO:0097550">
    <property type="term" value="C:transcription preinitiation complex"/>
    <property type="evidence" value="ECO:0000314"/>
    <property type="project" value="SGD"/>
</dbReference>
<dbReference type="GO" id="GO:0000993">
    <property type="term" value="F:RNA polymerase II complex binding"/>
    <property type="evidence" value="ECO:0000314"/>
    <property type="project" value="SGD"/>
</dbReference>
<dbReference type="GO" id="GO:0001139">
    <property type="term" value="F:RNA polymerase II complex recruiting activity"/>
    <property type="evidence" value="ECO:0000314"/>
    <property type="project" value="SGD"/>
</dbReference>
<dbReference type="GO" id="GO:0016251">
    <property type="term" value="F:RNA polymerase II general transcription initiation factor activity"/>
    <property type="evidence" value="ECO:0000318"/>
    <property type="project" value="GO_Central"/>
</dbReference>
<dbReference type="GO" id="GO:0017025">
    <property type="term" value="F:TBP-class protein binding"/>
    <property type="evidence" value="ECO:0000314"/>
    <property type="project" value="SGD"/>
</dbReference>
<dbReference type="GO" id="GO:0008270">
    <property type="term" value="F:zinc ion binding"/>
    <property type="evidence" value="ECO:0007669"/>
    <property type="project" value="UniProtKB-KW"/>
</dbReference>
<dbReference type="GO" id="GO:0006352">
    <property type="term" value="P:DNA-templated transcription initiation"/>
    <property type="evidence" value="ECO:0000318"/>
    <property type="project" value="GO_Central"/>
</dbReference>
<dbReference type="GO" id="GO:0051123">
    <property type="term" value="P:RNA polymerase II preinitiation complex assembly"/>
    <property type="evidence" value="ECO:0000314"/>
    <property type="project" value="SGD"/>
</dbReference>
<dbReference type="GO" id="GO:0001113">
    <property type="term" value="P:transcription open complex formation at RNA polymerase II promoter"/>
    <property type="evidence" value="ECO:0000315"/>
    <property type="project" value="SGD"/>
</dbReference>
<dbReference type="GO" id="GO:0001174">
    <property type="term" value="P:transcriptional start site selection at RNA polymerase II promoter"/>
    <property type="evidence" value="ECO:0000315"/>
    <property type="project" value="SGD"/>
</dbReference>
<dbReference type="CDD" id="cd20551">
    <property type="entry name" value="CYCLIN_TFIIB_rpt1"/>
    <property type="match status" value="1"/>
</dbReference>
<dbReference type="FunFam" id="1.10.472.170:FF:000001">
    <property type="entry name" value="Transcription initiation factor IIB"/>
    <property type="match status" value="1"/>
</dbReference>
<dbReference type="Gene3D" id="1.10.472.170">
    <property type="match status" value="1"/>
</dbReference>
<dbReference type="Gene3D" id="1.10.472.10">
    <property type="entry name" value="Cyclin-like"/>
    <property type="match status" value="1"/>
</dbReference>
<dbReference type="InterPro" id="IPR013763">
    <property type="entry name" value="Cyclin-like_dom"/>
</dbReference>
<dbReference type="InterPro" id="IPR036915">
    <property type="entry name" value="Cyclin-like_sf"/>
</dbReference>
<dbReference type="InterPro" id="IPR000812">
    <property type="entry name" value="TFIIB"/>
</dbReference>
<dbReference type="InterPro" id="IPR023486">
    <property type="entry name" value="TFIIB_CS"/>
</dbReference>
<dbReference type="InterPro" id="IPR013150">
    <property type="entry name" value="TFIIB_cyclin"/>
</dbReference>
<dbReference type="InterPro" id="IPR013137">
    <property type="entry name" value="Znf_TFIIB"/>
</dbReference>
<dbReference type="PANTHER" id="PTHR11618:SF13">
    <property type="entry name" value="TRANSCRIPTION INITIATION FACTOR IIB"/>
    <property type="match status" value="1"/>
</dbReference>
<dbReference type="PANTHER" id="PTHR11618">
    <property type="entry name" value="TRANSCRIPTION INITIATION FACTOR IIB-RELATED"/>
    <property type="match status" value="1"/>
</dbReference>
<dbReference type="Pfam" id="PF00382">
    <property type="entry name" value="TFIIB"/>
    <property type="match status" value="2"/>
</dbReference>
<dbReference type="Pfam" id="PF08271">
    <property type="entry name" value="Zn_Ribbon_TF"/>
    <property type="match status" value="1"/>
</dbReference>
<dbReference type="PRINTS" id="PR00685">
    <property type="entry name" value="TIFACTORIIB"/>
</dbReference>
<dbReference type="SMART" id="SM00385">
    <property type="entry name" value="CYCLIN"/>
    <property type="match status" value="2"/>
</dbReference>
<dbReference type="SUPFAM" id="SSF47954">
    <property type="entry name" value="Cyclin-like"/>
    <property type="match status" value="2"/>
</dbReference>
<dbReference type="SUPFAM" id="SSF57783">
    <property type="entry name" value="Zinc beta-ribbon"/>
    <property type="match status" value="1"/>
</dbReference>
<dbReference type="PROSITE" id="PS00782">
    <property type="entry name" value="TFIIB"/>
    <property type="match status" value="1"/>
</dbReference>
<dbReference type="PROSITE" id="PS51134">
    <property type="entry name" value="ZF_TFIIB"/>
    <property type="match status" value="1"/>
</dbReference>